<proteinExistence type="inferred from homology"/>
<name>METE_CAMJ8</name>
<comment type="function">
    <text evidence="1">Catalyzes the transfer of a methyl group from 5-methyltetrahydrofolate to homocysteine resulting in methionine formation.</text>
</comment>
<comment type="catalytic activity">
    <reaction evidence="1">
        <text>5-methyltetrahydropteroyltri-L-glutamate + L-homocysteine = tetrahydropteroyltri-L-glutamate + L-methionine</text>
        <dbReference type="Rhea" id="RHEA:21196"/>
        <dbReference type="ChEBI" id="CHEBI:57844"/>
        <dbReference type="ChEBI" id="CHEBI:58140"/>
        <dbReference type="ChEBI" id="CHEBI:58199"/>
        <dbReference type="ChEBI" id="CHEBI:58207"/>
        <dbReference type="EC" id="2.1.1.14"/>
    </reaction>
</comment>
<comment type="cofactor">
    <cofactor evidence="1">
        <name>Zn(2+)</name>
        <dbReference type="ChEBI" id="CHEBI:29105"/>
    </cofactor>
    <text evidence="1">Binds 1 zinc ion per subunit.</text>
</comment>
<comment type="pathway">
    <text evidence="1">Amino-acid biosynthesis; L-methionine biosynthesis via de novo pathway; L-methionine from L-homocysteine (MetE route): step 1/1.</text>
</comment>
<comment type="similarity">
    <text evidence="1">Belongs to the vitamin-B12 independent methionine synthase family.</text>
</comment>
<sequence length="754" mass="86907">MKNSIISYPRIGANRELKFAIEKYFKNQSSKEELLKSAKDLRIRHWQEIQKAGIDFIPSNDFSLYDNVLDAAVLFNIVHTKYKNLNLDALDEYFAQSRGYQGENGDVTALAMKKWFNTNYHYLVPECDNADIIALTGDKIFKEYLEAKELGIESKPVLIGIFTLFKLIAFKDEKTQKLAKEKLLNAYIELFDKLNELKVTWLELDEPYLVYDLSKEDIALFEEFYQELLNHKKDLKILLQSYFGDLRDIYPKLLESKFDALGLDFIEGKQSLALIQKYGFAKDKILFAGLINGKNIYANDYAKSLKLIKELQKYTQNIVLNTSCSLLHVPYSTEFESKLDSSYLKLFAFAKEKLQELKDLKEILNSSEENPLFRANQELFKNIPERLDEKVKARLKALKKEDFTRTPSFKERALIQKEFLKLPLLPTTTIGSFPQSADVRSNRLAFKQEKISAQNYTEFNQQKIKECIQIQEEIGLDVLVHGEFERNDMVEYFGENLKGFLFTQNGWVQSYGTRCVKPPVIWGDVSRTKPITLAWSKFAQSLSQKIVKGMLTGPVTILNWSFPREDISLKESTEQIALAIRDEVLDLENAGIKIIQIDEAALREKLPLRKSDWHSEYLDWAIPAFNLVHSGVKAKTQIHTHMCYSEFSDILKEIDAMDADVISFEASRSNLSLLDTLKAIRFKTEVGPGVYDIHSPRVPSVEELSLTIEKILNKLPKEQIWINPDCGLKTRAYEEVIASLKNLVTATQKIREQL</sequence>
<protein>
    <recommendedName>
        <fullName evidence="1">5-methyltetrahydropteroyltriglutamate--homocysteine methyltransferase</fullName>
        <ecNumber evidence="1">2.1.1.14</ecNumber>
    </recommendedName>
    <alternativeName>
        <fullName evidence="1">Cobalamin-independent methionine synthase</fullName>
    </alternativeName>
    <alternativeName>
        <fullName evidence="1">Methionine synthase, vitamin-B12 independent isozyme</fullName>
    </alternativeName>
</protein>
<dbReference type="EC" id="2.1.1.14" evidence="1"/>
<dbReference type="EMBL" id="CP000814">
    <property type="protein sequence ID" value="ABV52744.1"/>
    <property type="molecule type" value="Genomic_DNA"/>
</dbReference>
<dbReference type="RefSeq" id="WP_002877092.1">
    <property type="nucleotide sequence ID" value="NC_009839.1"/>
</dbReference>
<dbReference type="SMR" id="A8FMQ7"/>
<dbReference type="KEGG" id="cju:C8J_1145"/>
<dbReference type="HOGENOM" id="CLU_013175_0_0_7"/>
<dbReference type="UniPathway" id="UPA00051">
    <property type="reaction ID" value="UER00082"/>
</dbReference>
<dbReference type="GO" id="GO:0003871">
    <property type="term" value="F:5-methyltetrahydropteroyltriglutamate-homocysteine S-methyltransferase activity"/>
    <property type="evidence" value="ECO:0007669"/>
    <property type="project" value="UniProtKB-UniRule"/>
</dbReference>
<dbReference type="GO" id="GO:0008270">
    <property type="term" value="F:zinc ion binding"/>
    <property type="evidence" value="ECO:0007669"/>
    <property type="project" value="InterPro"/>
</dbReference>
<dbReference type="GO" id="GO:0009086">
    <property type="term" value="P:methionine biosynthetic process"/>
    <property type="evidence" value="ECO:0007669"/>
    <property type="project" value="UniProtKB-UniRule"/>
</dbReference>
<dbReference type="GO" id="GO:0032259">
    <property type="term" value="P:methylation"/>
    <property type="evidence" value="ECO:0007669"/>
    <property type="project" value="UniProtKB-KW"/>
</dbReference>
<dbReference type="CDD" id="cd03311">
    <property type="entry name" value="CIMS_C_terminal_like"/>
    <property type="match status" value="1"/>
</dbReference>
<dbReference type="CDD" id="cd03312">
    <property type="entry name" value="CIMS_N_terminal_like"/>
    <property type="match status" value="1"/>
</dbReference>
<dbReference type="Gene3D" id="3.20.20.210">
    <property type="match status" value="2"/>
</dbReference>
<dbReference type="HAMAP" id="MF_00172">
    <property type="entry name" value="Meth_synth"/>
    <property type="match status" value="1"/>
</dbReference>
<dbReference type="InterPro" id="IPR013215">
    <property type="entry name" value="Cbl-indep_Met_Synth_N"/>
</dbReference>
<dbReference type="InterPro" id="IPR006276">
    <property type="entry name" value="Cobalamin-indep_Met_synthase"/>
</dbReference>
<dbReference type="InterPro" id="IPR002629">
    <property type="entry name" value="Met_Synth_C/arc"/>
</dbReference>
<dbReference type="InterPro" id="IPR038071">
    <property type="entry name" value="UROD/MetE-like_sf"/>
</dbReference>
<dbReference type="NCBIfam" id="TIGR01371">
    <property type="entry name" value="met_syn_B12ind"/>
    <property type="match status" value="1"/>
</dbReference>
<dbReference type="NCBIfam" id="NF003556">
    <property type="entry name" value="PRK05222.1"/>
    <property type="match status" value="1"/>
</dbReference>
<dbReference type="PANTHER" id="PTHR30519">
    <property type="entry name" value="5-METHYLTETRAHYDROPTEROYLTRIGLUTAMATE--HOMOCYSTEINE METHYLTRANSFERASE"/>
    <property type="match status" value="1"/>
</dbReference>
<dbReference type="Pfam" id="PF08267">
    <property type="entry name" value="Meth_synt_1"/>
    <property type="match status" value="1"/>
</dbReference>
<dbReference type="Pfam" id="PF01717">
    <property type="entry name" value="Meth_synt_2"/>
    <property type="match status" value="1"/>
</dbReference>
<dbReference type="PIRSF" id="PIRSF000382">
    <property type="entry name" value="MeTrfase_B12_ind"/>
    <property type="match status" value="1"/>
</dbReference>
<dbReference type="SUPFAM" id="SSF51726">
    <property type="entry name" value="UROD/MetE-like"/>
    <property type="match status" value="2"/>
</dbReference>
<organism>
    <name type="scientific">Campylobacter jejuni subsp. jejuni serotype O:6 (strain 81116 / NCTC 11828)</name>
    <dbReference type="NCBI Taxonomy" id="407148"/>
    <lineage>
        <taxon>Bacteria</taxon>
        <taxon>Pseudomonadati</taxon>
        <taxon>Campylobacterota</taxon>
        <taxon>Epsilonproteobacteria</taxon>
        <taxon>Campylobacterales</taxon>
        <taxon>Campylobacteraceae</taxon>
        <taxon>Campylobacter</taxon>
    </lineage>
</organism>
<evidence type="ECO:0000255" key="1">
    <source>
        <dbReference type="HAMAP-Rule" id="MF_00172"/>
    </source>
</evidence>
<reference key="1">
    <citation type="journal article" date="2007" name="J. Bacteriol.">
        <title>The complete genome sequence of Campylobacter jejuni strain 81116 (NCTC11828).</title>
        <authorList>
            <person name="Pearson B.M."/>
            <person name="Gaskin D.J.H."/>
            <person name="Segers R.P.A.M."/>
            <person name="Wells J.M."/>
            <person name="Nuijten P.J.M."/>
            <person name="van Vliet A.H.M."/>
        </authorList>
    </citation>
    <scope>NUCLEOTIDE SEQUENCE [LARGE SCALE GENOMIC DNA]</scope>
    <source>
        <strain>81116 / NCTC 11828</strain>
    </source>
</reference>
<accession>A8FMQ7</accession>
<keyword id="KW-0028">Amino-acid biosynthesis</keyword>
<keyword id="KW-0479">Metal-binding</keyword>
<keyword id="KW-0486">Methionine biosynthesis</keyword>
<keyword id="KW-0489">Methyltransferase</keyword>
<keyword id="KW-0677">Repeat</keyword>
<keyword id="KW-0808">Transferase</keyword>
<keyword id="KW-0862">Zinc</keyword>
<feature type="chain" id="PRO_1000071610" description="5-methyltetrahydropteroyltriglutamate--homocysteine methyltransferase">
    <location>
        <begin position="1"/>
        <end position="754"/>
    </location>
</feature>
<feature type="active site" description="Proton donor" evidence="1">
    <location>
        <position position="694"/>
    </location>
</feature>
<feature type="binding site" evidence="1">
    <location>
        <begin position="15"/>
        <end position="18"/>
    </location>
    <ligand>
        <name>5-methyltetrahydropteroyltri-L-glutamate</name>
        <dbReference type="ChEBI" id="CHEBI:58207"/>
    </ligand>
</feature>
<feature type="binding site" evidence="1">
    <location>
        <position position="114"/>
    </location>
    <ligand>
        <name>5-methyltetrahydropteroyltri-L-glutamate</name>
        <dbReference type="ChEBI" id="CHEBI:58207"/>
    </ligand>
</feature>
<feature type="binding site" evidence="1">
    <location>
        <begin position="430"/>
        <end position="432"/>
    </location>
    <ligand>
        <name>L-homocysteine</name>
        <dbReference type="ChEBI" id="CHEBI:58199"/>
    </ligand>
</feature>
<feature type="binding site" evidence="1">
    <location>
        <begin position="430"/>
        <end position="432"/>
    </location>
    <ligand>
        <name>L-methionine</name>
        <dbReference type="ChEBI" id="CHEBI:57844"/>
    </ligand>
</feature>
<feature type="binding site" evidence="1">
    <location>
        <position position="483"/>
    </location>
    <ligand>
        <name>L-homocysteine</name>
        <dbReference type="ChEBI" id="CHEBI:58199"/>
    </ligand>
</feature>
<feature type="binding site" evidence="1">
    <location>
        <position position="483"/>
    </location>
    <ligand>
        <name>L-methionine</name>
        <dbReference type="ChEBI" id="CHEBI:57844"/>
    </ligand>
</feature>
<feature type="binding site" evidence="1">
    <location>
        <begin position="514"/>
        <end position="515"/>
    </location>
    <ligand>
        <name>5-methyltetrahydropteroyltri-L-glutamate</name>
        <dbReference type="ChEBI" id="CHEBI:58207"/>
    </ligand>
</feature>
<feature type="binding site" evidence="1">
    <location>
        <position position="560"/>
    </location>
    <ligand>
        <name>5-methyltetrahydropteroyltri-L-glutamate</name>
        <dbReference type="ChEBI" id="CHEBI:58207"/>
    </ligand>
</feature>
<feature type="binding site" evidence="1">
    <location>
        <position position="598"/>
    </location>
    <ligand>
        <name>L-homocysteine</name>
        <dbReference type="ChEBI" id="CHEBI:58199"/>
    </ligand>
</feature>
<feature type="binding site" evidence="1">
    <location>
        <position position="598"/>
    </location>
    <ligand>
        <name>L-methionine</name>
        <dbReference type="ChEBI" id="CHEBI:57844"/>
    </ligand>
</feature>
<feature type="binding site" evidence="1">
    <location>
        <position position="604"/>
    </location>
    <ligand>
        <name>5-methyltetrahydropteroyltri-L-glutamate</name>
        <dbReference type="ChEBI" id="CHEBI:58207"/>
    </ligand>
</feature>
<feature type="binding site" evidence="1">
    <location>
        <position position="641"/>
    </location>
    <ligand>
        <name>Zn(2+)</name>
        <dbReference type="ChEBI" id="CHEBI:29105"/>
        <note>catalytic</note>
    </ligand>
</feature>
<feature type="binding site" evidence="1">
    <location>
        <position position="643"/>
    </location>
    <ligand>
        <name>Zn(2+)</name>
        <dbReference type="ChEBI" id="CHEBI:29105"/>
        <note>catalytic</note>
    </ligand>
</feature>
<feature type="binding site" evidence="1">
    <location>
        <position position="665"/>
    </location>
    <ligand>
        <name>Zn(2+)</name>
        <dbReference type="ChEBI" id="CHEBI:29105"/>
        <note>catalytic</note>
    </ligand>
</feature>
<feature type="binding site" evidence="1">
    <location>
        <position position="726"/>
    </location>
    <ligand>
        <name>Zn(2+)</name>
        <dbReference type="ChEBI" id="CHEBI:29105"/>
        <note>catalytic</note>
    </ligand>
</feature>
<gene>
    <name evidence="1" type="primary">metE</name>
    <name type="ordered locus">C8J_1145</name>
</gene>